<accession>A9BF05</accession>
<reference key="1">
    <citation type="submission" date="2007-11" db="EMBL/GenBank/DDBJ databases">
        <title>Complete sequence of Petroga mobilis SJ95.</title>
        <authorList>
            <consortium name="US DOE Joint Genome Institute"/>
            <person name="Copeland A."/>
            <person name="Lucas S."/>
            <person name="Lapidus A."/>
            <person name="Barry K."/>
            <person name="Glavina del Rio T."/>
            <person name="Dalin E."/>
            <person name="Tice H."/>
            <person name="Pitluck S."/>
            <person name="Meincke L."/>
            <person name="Brettin T."/>
            <person name="Bruce D."/>
            <person name="Detter J.C."/>
            <person name="Han C."/>
            <person name="Kuske C.R."/>
            <person name="Schmutz J."/>
            <person name="Larimer F."/>
            <person name="Land M."/>
            <person name="Hauser L."/>
            <person name="Kyrpides N."/>
            <person name="Mikhailova N."/>
            <person name="Noll K."/>
            <person name="Richardson P."/>
        </authorList>
    </citation>
    <scope>NUCLEOTIDE SEQUENCE [LARGE SCALE GENOMIC DNA]</scope>
    <source>
        <strain>DSM 10674 / SJ95</strain>
    </source>
</reference>
<organism>
    <name type="scientific">Petrotoga mobilis (strain DSM 10674 / SJ95)</name>
    <dbReference type="NCBI Taxonomy" id="403833"/>
    <lineage>
        <taxon>Bacteria</taxon>
        <taxon>Thermotogati</taxon>
        <taxon>Thermotogota</taxon>
        <taxon>Thermotogae</taxon>
        <taxon>Petrotogales</taxon>
        <taxon>Petrotogaceae</taxon>
        <taxon>Petrotoga</taxon>
    </lineage>
</organism>
<protein>
    <recommendedName>
        <fullName evidence="1">Ribosomal RNA small subunit methyltransferase G</fullName>
        <ecNumber evidence="1">2.1.1.-</ecNumber>
    </recommendedName>
    <alternativeName>
        <fullName evidence="1">16S rRNA 7-methylguanosine methyltransferase</fullName>
        <shortName evidence="1">16S rRNA m7G methyltransferase</shortName>
    </alternativeName>
</protein>
<proteinExistence type="inferred from homology"/>
<evidence type="ECO:0000255" key="1">
    <source>
        <dbReference type="HAMAP-Rule" id="MF_00074"/>
    </source>
</evidence>
<feature type="chain" id="PRO_0000335395" description="Ribosomal RNA small subunit methyltransferase G">
    <location>
        <begin position="1"/>
        <end position="225"/>
    </location>
</feature>
<feature type="binding site" evidence="1">
    <location>
        <position position="62"/>
    </location>
    <ligand>
        <name>S-adenosyl-L-methionine</name>
        <dbReference type="ChEBI" id="CHEBI:59789"/>
    </ligand>
</feature>
<feature type="binding site" evidence="1">
    <location>
        <begin position="113"/>
        <end position="114"/>
    </location>
    <ligand>
        <name>S-adenosyl-L-methionine</name>
        <dbReference type="ChEBI" id="CHEBI:59789"/>
    </ligand>
</feature>
<feature type="binding site" evidence="1">
    <location>
        <position position="130"/>
    </location>
    <ligand>
        <name>S-adenosyl-L-methionine</name>
        <dbReference type="ChEBI" id="CHEBI:59789"/>
    </ligand>
</feature>
<sequence>MKESDEKAEKINKYIEMLINYPVNLTAYTTKKDAYENLILDSLIPIEAEDTFLNSKNIVDIGTGGGIPGLVWAIYFPEKEFYLVDSVSKKIEALKIFIKELKITNVYLFCERAEDFAKTHRDYFDFATCKALARSDIALEYLSPLVKVNSYISLFKGPSYYTNEMKYTQNVLKKLNIAEFKEIDYEIGEDKKKRYMILFKKIGITPQNFPRQVGIPKKFPLGEIK</sequence>
<gene>
    <name evidence="1" type="primary">rsmG</name>
    <name type="ordered locus">Pmob_0327</name>
</gene>
<dbReference type="EC" id="2.1.1.-" evidence="1"/>
<dbReference type="EMBL" id="CP000879">
    <property type="protein sequence ID" value="ABX31069.1"/>
    <property type="molecule type" value="Genomic_DNA"/>
</dbReference>
<dbReference type="RefSeq" id="WP_012208176.1">
    <property type="nucleotide sequence ID" value="NC_010003.1"/>
</dbReference>
<dbReference type="SMR" id="A9BF05"/>
<dbReference type="STRING" id="403833.Pmob_0327"/>
<dbReference type="KEGG" id="pmo:Pmob_0327"/>
<dbReference type="eggNOG" id="COG0357">
    <property type="taxonomic scope" value="Bacteria"/>
</dbReference>
<dbReference type="HOGENOM" id="CLU_065341_0_1_0"/>
<dbReference type="OrthoDB" id="9808773at2"/>
<dbReference type="Proteomes" id="UP000000789">
    <property type="component" value="Chromosome"/>
</dbReference>
<dbReference type="GO" id="GO:0005829">
    <property type="term" value="C:cytosol"/>
    <property type="evidence" value="ECO:0007669"/>
    <property type="project" value="TreeGrafter"/>
</dbReference>
<dbReference type="GO" id="GO:0070043">
    <property type="term" value="F:rRNA (guanine-N7-)-methyltransferase activity"/>
    <property type="evidence" value="ECO:0007669"/>
    <property type="project" value="UniProtKB-UniRule"/>
</dbReference>
<dbReference type="CDD" id="cd02440">
    <property type="entry name" value="AdoMet_MTases"/>
    <property type="match status" value="1"/>
</dbReference>
<dbReference type="Gene3D" id="3.40.50.150">
    <property type="entry name" value="Vaccinia Virus protein VP39"/>
    <property type="match status" value="1"/>
</dbReference>
<dbReference type="HAMAP" id="MF_00074">
    <property type="entry name" value="16SrRNA_methyltr_G"/>
    <property type="match status" value="1"/>
</dbReference>
<dbReference type="InterPro" id="IPR003682">
    <property type="entry name" value="rRNA_ssu_MeTfrase_G"/>
</dbReference>
<dbReference type="InterPro" id="IPR029063">
    <property type="entry name" value="SAM-dependent_MTases_sf"/>
</dbReference>
<dbReference type="NCBIfam" id="TIGR00138">
    <property type="entry name" value="rsmG_gidB"/>
    <property type="match status" value="1"/>
</dbReference>
<dbReference type="PANTHER" id="PTHR31760">
    <property type="entry name" value="S-ADENOSYL-L-METHIONINE-DEPENDENT METHYLTRANSFERASES SUPERFAMILY PROTEIN"/>
    <property type="match status" value="1"/>
</dbReference>
<dbReference type="PANTHER" id="PTHR31760:SF0">
    <property type="entry name" value="S-ADENOSYL-L-METHIONINE-DEPENDENT METHYLTRANSFERASES SUPERFAMILY PROTEIN"/>
    <property type="match status" value="1"/>
</dbReference>
<dbReference type="Pfam" id="PF02527">
    <property type="entry name" value="GidB"/>
    <property type="match status" value="1"/>
</dbReference>
<dbReference type="SUPFAM" id="SSF53335">
    <property type="entry name" value="S-adenosyl-L-methionine-dependent methyltransferases"/>
    <property type="match status" value="1"/>
</dbReference>
<comment type="function">
    <text evidence="1">Specifically methylates the N7 position of a guanine in 16S rRNA.</text>
</comment>
<comment type="subcellular location">
    <subcellularLocation>
        <location evidence="1">Cytoplasm</location>
    </subcellularLocation>
</comment>
<comment type="similarity">
    <text evidence="1">Belongs to the methyltransferase superfamily. RNA methyltransferase RsmG family.</text>
</comment>
<name>RSMG_PETMO</name>
<keyword id="KW-0963">Cytoplasm</keyword>
<keyword id="KW-0489">Methyltransferase</keyword>
<keyword id="KW-0698">rRNA processing</keyword>
<keyword id="KW-0949">S-adenosyl-L-methionine</keyword>
<keyword id="KW-0808">Transferase</keyword>